<gene>
    <name evidence="2" type="primary">rpsL</name>
    <name type="ordered locus">VS_2837</name>
</gene>
<sequence>MATINQLVRTPRVKQVVKSNVPALEACPQKRGVCTRVYTTTPKKPNSALRKVCRVRLTNGFEVTSYIGGEGHNLQEHSVVLIRGGRVKDLPGVRYHTVRGALDCAGVNDRKKGRSKYGVKRPKS</sequence>
<dbReference type="EMBL" id="FM954972">
    <property type="protein sequence ID" value="CAV20130.1"/>
    <property type="molecule type" value="Genomic_DNA"/>
</dbReference>
<dbReference type="SMR" id="B7VLG2"/>
<dbReference type="STRING" id="575788.VS_2837"/>
<dbReference type="KEGG" id="vsp:VS_2837"/>
<dbReference type="eggNOG" id="COG0048">
    <property type="taxonomic scope" value="Bacteria"/>
</dbReference>
<dbReference type="HOGENOM" id="CLU_104295_1_2_6"/>
<dbReference type="Proteomes" id="UP000009100">
    <property type="component" value="Chromosome 1"/>
</dbReference>
<dbReference type="GO" id="GO:0015935">
    <property type="term" value="C:small ribosomal subunit"/>
    <property type="evidence" value="ECO:0007669"/>
    <property type="project" value="InterPro"/>
</dbReference>
<dbReference type="GO" id="GO:0019843">
    <property type="term" value="F:rRNA binding"/>
    <property type="evidence" value="ECO:0007669"/>
    <property type="project" value="UniProtKB-UniRule"/>
</dbReference>
<dbReference type="GO" id="GO:0003735">
    <property type="term" value="F:structural constituent of ribosome"/>
    <property type="evidence" value="ECO:0007669"/>
    <property type="project" value="InterPro"/>
</dbReference>
<dbReference type="GO" id="GO:0000049">
    <property type="term" value="F:tRNA binding"/>
    <property type="evidence" value="ECO:0007669"/>
    <property type="project" value="UniProtKB-UniRule"/>
</dbReference>
<dbReference type="GO" id="GO:0006412">
    <property type="term" value="P:translation"/>
    <property type="evidence" value="ECO:0007669"/>
    <property type="project" value="UniProtKB-UniRule"/>
</dbReference>
<dbReference type="CDD" id="cd03368">
    <property type="entry name" value="Ribosomal_S12"/>
    <property type="match status" value="1"/>
</dbReference>
<dbReference type="FunFam" id="2.40.50.140:FF:000001">
    <property type="entry name" value="30S ribosomal protein S12"/>
    <property type="match status" value="1"/>
</dbReference>
<dbReference type="Gene3D" id="2.40.50.140">
    <property type="entry name" value="Nucleic acid-binding proteins"/>
    <property type="match status" value="1"/>
</dbReference>
<dbReference type="HAMAP" id="MF_00403_B">
    <property type="entry name" value="Ribosomal_uS12_B"/>
    <property type="match status" value="1"/>
</dbReference>
<dbReference type="InterPro" id="IPR012340">
    <property type="entry name" value="NA-bd_OB-fold"/>
</dbReference>
<dbReference type="InterPro" id="IPR006032">
    <property type="entry name" value="Ribosomal_uS12"/>
</dbReference>
<dbReference type="InterPro" id="IPR005679">
    <property type="entry name" value="Ribosomal_uS12_bac"/>
</dbReference>
<dbReference type="NCBIfam" id="TIGR00981">
    <property type="entry name" value="rpsL_bact"/>
    <property type="match status" value="1"/>
</dbReference>
<dbReference type="PANTHER" id="PTHR11652">
    <property type="entry name" value="30S RIBOSOMAL PROTEIN S12 FAMILY MEMBER"/>
    <property type="match status" value="1"/>
</dbReference>
<dbReference type="Pfam" id="PF00164">
    <property type="entry name" value="Ribosom_S12_S23"/>
    <property type="match status" value="1"/>
</dbReference>
<dbReference type="PIRSF" id="PIRSF002133">
    <property type="entry name" value="Ribosomal_S12/S23"/>
    <property type="match status" value="1"/>
</dbReference>
<dbReference type="PRINTS" id="PR01034">
    <property type="entry name" value="RIBOSOMALS12"/>
</dbReference>
<dbReference type="SUPFAM" id="SSF50249">
    <property type="entry name" value="Nucleic acid-binding proteins"/>
    <property type="match status" value="1"/>
</dbReference>
<dbReference type="PROSITE" id="PS00055">
    <property type="entry name" value="RIBOSOMAL_S12"/>
    <property type="match status" value="1"/>
</dbReference>
<keyword id="KW-0488">Methylation</keyword>
<keyword id="KW-0687">Ribonucleoprotein</keyword>
<keyword id="KW-0689">Ribosomal protein</keyword>
<keyword id="KW-0694">RNA-binding</keyword>
<keyword id="KW-0699">rRNA-binding</keyword>
<keyword id="KW-0820">tRNA-binding</keyword>
<protein>
    <recommendedName>
        <fullName evidence="2">Small ribosomal subunit protein uS12</fullName>
    </recommendedName>
    <alternativeName>
        <fullName evidence="3">30S ribosomal protein S12</fullName>
    </alternativeName>
</protein>
<proteinExistence type="inferred from homology"/>
<reference key="1">
    <citation type="submission" date="2009-02" db="EMBL/GenBank/DDBJ databases">
        <title>Vibrio splendidus str. LGP32 complete genome.</title>
        <authorList>
            <person name="Mazel D."/>
            <person name="Le Roux F."/>
        </authorList>
    </citation>
    <scope>NUCLEOTIDE SEQUENCE [LARGE SCALE GENOMIC DNA]</scope>
    <source>
        <strain>LGP32</strain>
    </source>
</reference>
<organism>
    <name type="scientific">Vibrio atlanticus (strain LGP32)</name>
    <name type="common">Vibrio splendidus (strain Mel32)</name>
    <dbReference type="NCBI Taxonomy" id="575788"/>
    <lineage>
        <taxon>Bacteria</taxon>
        <taxon>Pseudomonadati</taxon>
        <taxon>Pseudomonadota</taxon>
        <taxon>Gammaproteobacteria</taxon>
        <taxon>Vibrionales</taxon>
        <taxon>Vibrionaceae</taxon>
        <taxon>Vibrio</taxon>
    </lineage>
</organism>
<evidence type="ECO:0000250" key="1"/>
<evidence type="ECO:0000255" key="2">
    <source>
        <dbReference type="HAMAP-Rule" id="MF_00403"/>
    </source>
</evidence>
<evidence type="ECO:0000305" key="3"/>
<name>RS12_VIBA3</name>
<feature type="chain" id="PRO_1000194223" description="Small ribosomal subunit protein uS12">
    <location>
        <begin position="1"/>
        <end position="124"/>
    </location>
</feature>
<feature type="modified residue" description="3-methylthioaspartic acid" evidence="1">
    <location>
        <position position="89"/>
    </location>
</feature>
<comment type="function">
    <text evidence="2">With S4 and S5 plays an important role in translational accuracy.</text>
</comment>
<comment type="function">
    <text evidence="2">Interacts with and stabilizes bases of the 16S rRNA that are involved in tRNA selection in the A site and with the mRNA backbone. Located at the interface of the 30S and 50S subunits, it traverses the body of the 30S subunit contacting proteins on the other side and probably holding the rRNA structure together. The combined cluster of proteins S8, S12 and S17 appears to hold together the shoulder and platform of the 30S subunit.</text>
</comment>
<comment type="subunit">
    <text evidence="2">Part of the 30S ribosomal subunit. Contacts proteins S8 and S17. May interact with IF1 in the 30S initiation complex.</text>
</comment>
<comment type="similarity">
    <text evidence="2">Belongs to the universal ribosomal protein uS12 family.</text>
</comment>
<accession>B7VLG2</accession>